<sequence length="208" mass="22533">MKIVEVKHPLVKHKLGLMRENDISTKRFRELASEVGSLLTYEATADLETEKVTIEGWNGPVEIDQIKGKKITVVPILRAGLGMMEGVLENVPSARISVVGMYRNEETLEPVPYFQKLVSNIDERMALIVDPMLATGGSVIATIDLLKKAGCSSIKVLVLVAAPEGIAALEKAHPDVELYTASIDQGLNEHGYIIPGLGDAGDKIFGTK</sequence>
<keyword id="KW-0021">Allosteric enzyme</keyword>
<keyword id="KW-0328">Glycosyltransferase</keyword>
<keyword id="KW-0342">GTP-binding</keyword>
<keyword id="KW-0460">Magnesium</keyword>
<keyword id="KW-0547">Nucleotide-binding</keyword>
<keyword id="KW-1185">Reference proteome</keyword>
<keyword id="KW-0808">Transferase</keyword>
<proteinExistence type="inferred from homology"/>
<dbReference type="EC" id="2.4.2.9" evidence="1"/>
<dbReference type="EMBL" id="AF427145">
    <property type="protein sequence ID" value="AAL28076.1"/>
    <property type="molecule type" value="Genomic_DNA"/>
</dbReference>
<dbReference type="EMBL" id="AE006468">
    <property type="protein sequence ID" value="AAL21392.1"/>
    <property type="molecule type" value="Genomic_DNA"/>
</dbReference>
<dbReference type="RefSeq" id="NP_461433.1">
    <property type="nucleotide sequence ID" value="NC_003197.2"/>
</dbReference>
<dbReference type="RefSeq" id="WP_000706208.1">
    <property type="nucleotide sequence ID" value="NC_003197.2"/>
</dbReference>
<dbReference type="SMR" id="P0A2M5"/>
<dbReference type="STRING" id="99287.STM2498"/>
<dbReference type="PaxDb" id="99287-STM2498"/>
<dbReference type="GeneID" id="1254020"/>
<dbReference type="KEGG" id="stm:STM2498"/>
<dbReference type="PATRIC" id="fig|99287.12.peg.2636"/>
<dbReference type="HOGENOM" id="CLU_067096_2_2_6"/>
<dbReference type="OMA" id="KHKIGLM"/>
<dbReference type="PhylomeDB" id="P0A2M5"/>
<dbReference type="BioCyc" id="SENT99287:STM2498-MONOMER"/>
<dbReference type="UniPathway" id="UPA00574">
    <property type="reaction ID" value="UER00636"/>
</dbReference>
<dbReference type="Proteomes" id="UP000001014">
    <property type="component" value="Chromosome"/>
</dbReference>
<dbReference type="GO" id="GO:0005737">
    <property type="term" value="C:cytoplasm"/>
    <property type="evidence" value="ECO:0000318"/>
    <property type="project" value="GO_Central"/>
</dbReference>
<dbReference type="GO" id="GO:0005829">
    <property type="term" value="C:cytosol"/>
    <property type="evidence" value="ECO:0000318"/>
    <property type="project" value="GO_Central"/>
</dbReference>
<dbReference type="GO" id="GO:0005525">
    <property type="term" value="F:GTP binding"/>
    <property type="evidence" value="ECO:0007669"/>
    <property type="project" value="UniProtKB-KW"/>
</dbReference>
<dbReference type="GO" id="GO:0000287">
    <property type="term" value="F:magnesium ion binding"/>
    <property type="evidence" value="ECO:0007669"/>
    <property type="project" value="UniProtKB-UniRule"/>
</dbReference>
<dbReference type="GO" id="GO:0004845">
    <property type="term" value="F:uracil phosphoribosyltransferase activity"/>
    <property type="evidence" value="ECO:0000318"/>
    <property type="project" value="GO_Central"/>
</dbReference>
<dbReference type="GO" id="GO:0044206">
    <property type="term" value="P:UMP salvage"/>
    <property type="evidence" value="ECO:0007669"/>
    <property type="project" value="UniProtKB-UniRule"/>
</dbReference>
<dbReference type="GO" id="GO:0006223">
    <property type="term" value="P:uracil salvage"/>
    <property type="evidence" value="ECO:0007669"/>
    <property type="project" value="InterPro"/>
</dbReference>
<dbReference type="CDD" id="cd06223">
    <property type="entry name" value="PRTases_typeI"/>
    <property type="match status" value="1"/>
</dbReference>
<dbReference type="FunFam" id="3.40.50.2020:FF:000003">
    <property type="entry name" value="Uracil phosphoribosyltransferase"/>
    <property type="match status" value="1"/>
</dbReference>
<dbReference type="Gene3D" id="3.40.50.2020">
    <property type="match status" value="1"/>
</dbReference>
<dbReference type="HAMAP" id="MF_01218_B">
    <property type="entry name" value="Upp_B"/>
    <property type="match status" value="1"/>
</dbReference>
<dbReference type="InterPro" id="IPR000836">
    <property type="entry name" value="PRibTrfase_dom"/>
</dbReference>
<dbReference type="InterPro" id="IPR029057">
    <property type="entry name" value="PRTase-like"/>
</dbReference>
<dbReference type="InterPro" id="IPR034332">
    <property type="entry name" value="Upp_B"/>
</dbReference>
<dbReference type="InterPro" id="IPR050054">
    <property type="entry name" value="UPRTase/APRTase"/>
</dbReference>
<dbReference type="InterPro" id="IPR005765">
    <property type="entry name" value="Ura_phspho_trans"/>
</dbReference>
<dbReference type="NCBIfam" id="NF001097">
    <property type="entry name" value="PRK00129.1"/>
    <property type="match status" value="1"/>
</dbReference>
<dbReference type="NCBIfam" id="TIGR01091">
    <property type="entry name" value="upp"/>
    <property type="match status" value="1"/>
</dbReference>
<dbReference type="PANTHER" id="PTHR32315">
    <property type="entry name" value="ADENINE PHOSPHORIBOSYLTRANSFERASE"/>
    <property type="match status" value="1"/>
</dbReference>
<dbReference type="PANTHER" id="PTHR32315:SF4">
    <property type="entry name" value="URACIL PHOSPHORIBOSYLTRANSFERASE, CHLOROPLASTIC"/>
    <property type="match status" value="1"/>
</dbReference>
<dbReference type="Pfam" id="PF14681">
    <property type="entry name" value="UPRTase"/>
    <property type="match status" value="1"/>
</dbReference>
<dbReference type="SUPFAM" id="SSF53271">
    <property type="entry name" value="PRTase-like"/>
    <property type="match status" value="1"/>
</dbReference>
<name>UPP_SALTY</name>
<protein>
    <recommendedName>
        <fullName evidence="1">Uracil phosphoribosyltransferase</fullName>
        <ecNumber evidence="1">2.4.2.9</ecNumber>
    </recommendedName>
    <alternativeName>
        <fullName evidence="1">UMP pyrophosphorylase</fullName>
    </alternativeName>
    <alternativeName>
        <fullName evidence="1">UPRTase</fullName>
    </alternativeName>
</protein>
<accession>P0A2M5</accession>
<accession>Q93A76</accession>
<evidence type="ECO:0000255" key="1">
    <source>
        <dbReference type="HAMAP-Rule" id="MF_01218"/>
    </source>
</evidence>
<feature type="chain" id="PRO_0000120876" description="Uracil phosphoribosyltransferase">
    <location>
        <begin position="1"/>
        <end position="208"/>
    </location>
</feature>
<feature type="binding site" evidence="1">
    <location>
        <position position="78"/>
    </location>
    <ligand>
        <name>5-phospho-alpha-D-ribose 1-diphosphate</name>
        <dbReference type="ChEBI" id="CHEBI:58017"/>
    </ligand>
</feature>
<feature type="binding site" evidence="1">
    <location>
        <position position="103"/>
    </location>
    <ligand>
        <name>5-phospho-alpha-D-ribose 1-diphosphate</name>
        <dbReference type="ChEBI" id="CHEBI:58017"/>
    </ligand>
</feature>
<feature type="binding site" evidence="1">
    <location>
        <begin position="130"/>
        <end position="138"/>
    </location>
    <ligand>
        <name>5-phospho-alpha-D-ribose 1-diphosphate</name>
        <dbReference type="ChEBI" id="CHEBI:58017"/>
    </ligand>
</feature>
<feature type="binding site" evidence="1">
    <location>
        <position position="193"/>
    </location>
    <ligand>
        <name>uracil</name>
        <dbReference type="ChEBI" id="CHEBI:17568"/>
    </ligand>
</feature>
<feature type="binding site" evidence="1">
    <location>
        <begin position="198"/>
        <end position="200"/>
    </location>
    <ligand>
        <name>uracil</name>
        <dbReference type="ChEBI" id="CHEBI:17568"/>
    </ligand>
</feature>
<feature type="binding site" evidence="1">
    <location>
        <position position="199"/>
    </location>
    <ligand>
        <name>5-phospho-alpha-D-ribose 1-diphosphate</name>
        <dbReference type="ChEBI" id="CHEBI:58017"/>
    </ligand>
</feature>
<comment type="function">
    <text evidence="1">Catalyzes the conversion of uracil and 5-phospho-alpha-D-ribose 1-diphosphate (PRPP) to UMP and diphosphate.</text>
</comment>
<comment type="catalytic activity">
    <reaction evidence="1">
        <text>UMP + diphosphate = 5-phospho-alpha-D-ribose 1-diphosphate + uracil</text>
        <dbReference type="Rhea" id="RHEA:13017"/>
        <dbReference type="ChEBI" id="CHEBI:17568"/>
        <dbReference type="ChEBI" id="CHEBI:33019"/>
        <dbReference type="ChEBI" id="CHEBI:57865"/>
        <dbReference type="ChEBI" id="CHEBI:58017"/>
        <dbReference type="EC" id="2.4.2.9"/>
    </reaction>
</comment>
<comment type="cofactor">
    <cofactor evidence="1">
        <name>Mg(2+)</name>
        <dbReference type="ChEBI" id="CHEBI:18420"/>
    </cofactor>
    <text evidence="1">Binds 1 Mg(2+) ion per subunit. The magnesium is bound as Mg-PRPP.</text>
</comment>
<comment type="activity regulation">
    <text evidence="1">Allosterically activated by GTP.</text>
</comment>
<comment type="pathway">
    <text evidence="1">Pyrimidine metabolism; UMP biosynthesis via salvage pathway; UMP from uracil: step 1/1.</text>
</comment>
<comment type="similarity">
    <text evidence="1">Belongs to the UPRTase family.</text>
</comment>
<reference key="1">
    <citation type="submission" date="2001-10" db="EMBL/GenBank/DDBJ databases">
        <authorList>
            <person name="Glaab W.E."/>
            <person name="Skopek T.R."/>
        </authorList>
    </citation>
    <scope>NUCLEOTIDE SEQUENCE [GENOMIC DNA]</scope>
    <source>
        <strain>TA100</strain>
    </source>
</reference>
<reference key="2">
    <citation type="journal article" date="2001" name="Nature">
        <title>Complete genome sequence of Salmonella enterica serovar Typhimurium LT2.</title>
        <authorList>
            <person name="McClelland M."/>
            <person name="Sanderson K.E."/>
            <person name="Spieth J."/>
            <person name="Clifton S.W."/>
            <person name="Latreille P."/>
            <person name="Courtney L."/>
            <person name="Porwollik S."/>
            <person name="Ali J."/>
            <person name="Dante M."/>
            <person name="Du F."/>
            <person name="Hou S."/>
            <person name="Layman D."/>
            <person name="Leonard S."/>
            <person name="Nguyen C."/>
            <person name="Scott K."/>
            <person name="Holmes A."/>
            <person name="Grewal N."/>
            <person name="Mulvaney E."/>
            <person name="Ryan E."/>
            <person name="Sun H."/>
            <person name="Florea L."/>
            <person name="Miller W."/>
            <person name="Stoneking T."/>
            <person name="Nhan M."/>
            <person name="Waterston R."/>
            <person name="Wilson R.K."/>
        </authorList>
    </citation>
    <scope>NUCLEOTIDE SEQUENCE [LARGE SCALE GENOMIC DNA]</scope>
    <source>
        <strain>LT2 / SGSC1412 / ATCC 700720</strain>
    </source>
</reference>
<gene>
    <name evidence="1" type="primary">upp</name>
    <name type="ordered locus">STM2498</name>
</gene>
<organism>
    <name type="scientific">Salmonella typhimurium (strain LT2 / SGSC1412 / ATCC 700720)</name>
    <dbReference type="NCBI Taxonomy" id="99287"/>
    <lineage>
        <taxon>Bacteria</taxon>
        <taxon>Pseudomonadati</taxon>
        <taxon>Pseudomonadota</taxon>
        <taxon>Gammaproteobacteria</taxon>
        <taxon>Enterobacterales</taxon>
        <taxon>Enterobacteriaceae</taxon>
        <taxon>Salmonella</taxon>
    </lineage>
</organism>